<sequence>MSIESSSTESSPNTEALQLNGTEVRILGCLIEKQATNPETYPLTLNALVTACNQKTSRDPVMNLTQGQVGQSLRALEGRGLTRLVMGSRADRWEHRVDKGLELVPAQVILTGLLLLRGPQTVNELLTRSNRMHDFEDSEQVVHQLERLIARGLAMLVPRQSGQREDRYMHLLGDPESLQELLAARQQAPERHSASPAANSRIDELEARVAALEERLARLEHAEE</sequence>
<reference key="1">
    <citation type="journal article" date="2005" name="Proc. Natl. Acad. Sci. U.S.A.">
        <title>Comparison of the complete genome sequences of Pseudomonas syringae pv. syringae B728a and pv. tomato DC3000.</title>
        <authorList>
            <person name="Feil H."/>
            <person name="Feil W.S."/>
            <person name="Chain P."/>
            <person name="Larimer F."/>
            <person name="Dibartolo G."/>
            <person name="Copeland A."/>
            <person name="Lykidis A."/>
            <person name="Trong S."/>
            <person name="Nolan M."/>
            <person name="Goltsman E."/>
            <person name="Thiel J."/>
            <person name="Malfatti S."/>
            <person name="Loper J.E."/>
            <person name="Lapidus A."/>
            <person name="Detter J.C."/>
            <person name="Land M."/>
            <person name="Richardson P.M."/>
            <person name="Kyrpides N.C."/>
            <person name="Ivanova N."/>
            <person name="Lindow S.E."/>
        </authorList>
    </citation>
    <scope>NUCLEOTIDE SEQUENCE [LARGE SCALE GENOMIC DNA]</scope>
    <source>
        <strain>B728a</strain>
    </source>
</reference>
<comment type="similarity">
    <text evidence="1">Belongs to the UPF0502 family.</text>
</comment>
<feature type="chain" id="PRO_0000309409" description="UPF0502 protein Psyr_2419">
    <location>
        <begin position="1"/>
        <end position="224"/>
    </location>
</feature>
<protein>
    <recommendedName>
        <fullName evidence="1">UPF0502 protein Psyr_2419</fullName>
    </recommendedName>
</protein>
<evidence type="ECO:0000255" key="1">
    <source>
        <dbReference type="HAMAP-Rule" id="MF_01584"/>
    </source>
</evidence>
<accession>Q4ZTR4</accession>
<proteinExistence type="inferred from homology"/>
<dbReference type="EMBL" id="CP000075">
    <property type="protein sequence ID" value="AAY37458.1"/>
    <property type="molecule type" value="Genomic_DNA"/>
</dbReference>
<dbReference type="RefSeq" id="WP_011267665.1">
    <property type="nucleotide sequence ID" value="NC_007005.1"/>
</dbReference>
<dbReference type="RefSeq" id="YP_235496.1">
    <property type="nucleotide sequence ID" value="NC_007005.1"/>
</dbReference>
<dbReference type="SMR" id="Q4ZTR4"/>
<dbReference type="KEGG" id="psb:Psyr_2419"/>
<dbReference type="PATRIC" id="fig|205918.7.peg.2475"/>
<dbReference type="eggNOG" id="COG3132">
    <property type="taxonomic scope" value="Bacteria"/>
</dbReference>
<dbReference type="HOGENOM" id="CLU_057831_2_0_6"/>
<dbReference type="OrthoDB" id="9784785at2"/>
<dbReference type="Proteomes" id="UP000000426">
    <property type="component" value="Chromosome"/>
</dbReference>
<dbReference type="Gene3D" id="1.10.10.10">
    <property type="entry name" value="Winged helix-like DNA-binding domain superfamily/Winged helix DNA-binding domain"/>
    <property type="match status" value="2"/>
</dbReference>
<dbReference type="HAMAP" id="MF_01584">
    <property type="entry name" value="UPF0502"/>
    <property type="match status" value="1"/>
</dbReference>
<dbReference type="InterPro" id="IPR007432">
    <property type="entry name" value="DUF480"/>
</dbReference>
<dbReference type="InterPro" id="IPR036388">
    <property type="entry name" value="WH-like_DNA-bd_sf"/>
</dbReference>
<dbReference type="InterPro" id="IPR036390">
    <property type="entry name" value="WH_DNA-bd_sf"/>
</dbReference>
<dbReference type="PANTHER" id="PTHR38768">
    <property type="entry name" value="UPF0502 PROTEIN YCEH"/>
    <property type="match status" value="1"/>
</dbReference>
<dbReference type="PANTHER" id="PTHR38768:SF1">
    <property type="entry name" value="UPF0502 PROTEIN YCEH"/>
    <property type="match status" value="1"/>
</dbReference>
<dbReference type="Pfam" id="PF04337">
    <property type="entry name" value="DUF480"/>
    <property type="match status" value="1"/>
</dbReference>
<dbReference type="SUPFAM" id="SSF46785">
    <property type="entry name" value="Winged helix' DNA-binding domain"/>
    <property type="match status" value="2"/>
</dbReference>
<name>Y2419_PSEU2</name>
<gene>
    <name type="ordered locus">Psyr_2419</name>
</gene>
<organism>
    <name type="scientific">Pseudomonas syringae pv. syringae (strain B728a)</name>
    <dbReference type="NCBI Taxonomy" id="205918"/>
    <lineage>
        <taxon>Bacteria</taxon>
        <taxon>Pseudomonadati</taxon>
        <taxon>Pseudomonadota</taxon>
        <taxon>Gammaproteobacteria</taxon>
        <taxon>Pseudomonadales</taxon>
        <taxon>Pseudomonadaceae</taxon>
        <taxon>Pseudomonas</taxon>
        <taxon>Pseudomonas syringae</taxon>
    </lineage>
</organism>